<protein>
    <recommendedName>
        <fullName evidence="1">Segregation and condensation protein B</fullName>
    </recommendedName>
</protein>
<sequence length="183" mass="20495">MTYLSQIEALLFVAGEEGLSLRHLASMLSLTPTALQQQLEKLSQKYEKDQHSSLCLIETANTYRLVTKEGFAELLRAYAKTPMNQSLSRASLEVLSIVAYKQPITRIEIDDIRGVNSSGALSKLLAFDLIREAGKKDVVGRPHLYATTDYFLDYMGINHLDELIEVSAVEPADEEIALFRTQD</sequence>
<organism>
    <name type="scientific">Streptococcus pyogenes serotype M28 (strain MGAS6180)</name>
    <dbReference type="NCBI Taxonomy" id="319701"/>
    <lineage>
        <taxon>Bacteria</taxon>
        <taxon>Bacillati</taxon>
        <taxon>Bacillota</taxon>
        <taxon>Bacilli</taxon>
        <taxon>Lactobacillales</taxon>
        <taxon>Streptococcaceae</taxon>
        <taxon>Streptococcus</taxon>
    </lineage>
</organism>
<dbReference type="EMBL" id="CP000056">
    <property type="protein sequence ID" value="AAX71412.1"/>
    <property type="molecule type" value="Genomic_DNA"/>
</dbReference>
<dbReference type="RefSeq" id="WP_002985894.1">
    <property type="nucleotide sequence ID" value="NC_007296.2"/>
</dbReference>
<dbReference type="SMR" id="Q48V44"/>
<dbReference type="GeneID" id="69901359"/>
<dbReference type="KEGG" id="spb:M28_Spy0298"/>
<dbReference type="HOGENOM" id="CLU_045647_5_3_9"/>
<dbReference type="GO" id="GO:0005737">
    <property type="term" value="C:cytoplasm"/>
    <property type="evidence" value="ECO:0007669"/>
    <property type="project" value="UniProtKB-SubCell"/>
</dbReference>
<dbReference type="GO" id="GO:0051301">
    <property type="term" value="P:cell division"/>
    <property type="evidence" value="ECO:0007669"/>
    <property type="project" value="UniProtKB-KW"/>
</dbReference>
<dbReference type="GO" id="GO:0051304">
    <property type="term" value="P:chromosome separation"/>
    <property type="evidence" value="ECO:0007669"/>
    <property type="project" value="InterPro"/>
</dbReference>
<dbReference type="GO" id="GO:0006260">
    <property type="term" value="P:DNA replication"/>
    <property type="evidence" value="ECO:0007669"/>
    <property type="project" value="UniProtKB-UniRule"/>
</dbReference>
<dbReference type="Gene3D" id="1.10.10.10">
    <property type="entry name" value="Winged helix-like DNA-binding domain superfamily/Winged helix DNA-binding domain"/>
    <property type="match status" value="2"/>
</dbReference>
<dbReference type="HAMAP" id="MF_01804">
    <property type="entry name" value="ScpB"/>
    <property type="match status" value="1"/>
</dbReference>
<dbReference type="InterPro" id="IPR005234">
    <property type="entry name" value="ScpB_csome_segregation"/>
</dbReference>
<dbReference type="InterPro" id="IPR036388">
    <property type="entry name" value="WH-like_DNA-bd_sf"/>
</dbReference>
<dbReference type="InterPro" id="IPR036390">
    <property type="entry name" value="WH_DNA-bd_sf"/>
</dbReference>
<dbReference type="NCBIfam" id="TIGR00281">
    <property type="entry name" value="SMC-Scp complex subunit ScpB"/>
    <property type="match status" value="1"/>
</dbReference>
<dbReference type="PANTHER" id="PTHR34298">
    <property type="entry name" value="SEGREGATION AND CONDENSATION PROTEIN B"/>
    <property type="match status" value="1"/>
</dbReference>
<dbReference type="PANTHER" id="PTHR34298:SF2">
    <property type="entry name" value="SEGREGATION AND CONDENSATION PROTEIN B"/>
    <property type="match status" value="1"/>
</dbReference>
<dbReference type="Pfam" id="PF04079">
    <property type="entry name" value="SMC_ScpB"/>
    <property type="match status" value="1"/>
</dbReference>
<dbReference type="PIRSF" id="PIRSF019345">
    <property type="entry name" value="ScpB"/>
    <property type="match status" value="1"/>
</dbReference>
<dbReference type="SUPFAM" id="SSF46785">
    <property type="entry name" value="Winged helix' DNA-binding domain"/>
    <property type="match status" value="2"/>
</dbReference>
<keyword id="KW-0131">Cell cycle</keyword>
<keyword id="KW-0132">Cell division</keyword>
<keyword id="KW-0159">Chromosome partition</keyword>
<keyword id="KW-0963">Cytoplasm</keyword>
<feature type="chain" id="PRO_0000273312" description="Segregation and condensation protein B">
    <location>
        <begin position="1"/>
        <end position="183"/>
    </location>
</feature>
<comment type="function">
    <text evidence="1">Participates in chromosomal partition during cell division. May act via the formation of a condensin-like complex containing Smc and ScpA that pull DNA away from mid-cell into both cell halves.</text>
</comment>
<comment type="subunit">
    <text evidence="1">Homodimer. Homodimerization may be required to stabilize the binding of ScpA to the Smc head domains. Component of a cohesin-like complex composed of ScpA, ScpB and the Smc homodimer, in which ScpA and ScpB bind to the head domain of Smc. The presence of the three proteins is required for the association of the complex with DNA.</text>
</comment>
<comment type="subcellular location">
    <subcellularLocation>
        <location evidence="1">Cytoplasm</location>
    </subcellularLocation>
    <text evidence="1">Associated with two foci at the outer edges of the nucleoid region in young cells, and at four foci within both cell halves in older cells.</text>
</comment>
<comment type="similarity">
    <text evidence="1">Belongs to the ScpB family.</text>
</comment>
<reference key="1">
    <citation type="journal article" date="2005" name="J. Infect. Dis.">
        <title>Genome sequence of a serotype M28 strain of group A Streptococcus: potential new insights into puerperal sepsis and bacterial disease specificity.</title>
        <authorList>
            <person name="Green N.M."/>
            <person name="Zhang S."/>
            <person name="Porcella S.F."/>
            <person name="Nagiec M.J."/>
            <person name="Barbian K.D."/>
            <person name="Beres S.B."/>
            <person name="Lefebvre R.B."/>
            <person name="Musser J.M."/>
        </authorList>
    </citation>
    <scope>NUCLEOTIDE SEQUENCE [LARGE SCALE GENOMIC DNA]</scope>
    <source>
        <strain>MGAS6180</strain>
    </source>
</reference>
<name>SCPB_STRPM</name>
<accession>Q48V44</accession>
<proteinExistence type="inferred from homology"/>
<gene>
    <name evidence="1" type="primary">scpB</name>
    <name type="ordered locus">M28_Spy0298</name>
</gene>
<evidence type="ECO:0000255" key="1">
    <source>
        <dbReference type="HAMAP-Rule" id="MF_01804"/>
    </source>
</evidence>